<protein>
    <recommendedName>
        <fullName evidence="1">Aspartate carbamoyltransferase regulatory chain</fullName>
    </recommendedName>
</protein>
<feature type="chain" id="PRO_1000193106" description="Aspartate carbamoyltransferase regulatory chain">
    <location>
        <begin position="1"/>
        <end position="153"/>
    </location>
</feature>
<feature type="binding site" evidence="1">
    <location>
        <position position="109"/>
    </location>
    <ligand>
        <name>Zn(2+)</name>
        <dbReference type="ChEBI" id="CHEBI:29105"/>
    </ligand>
</feature>
<feature type="binding site" evidence="1">
    <location>
        <position position="114"/>
    </location>
    <ligand>
        <name>Zn(2+)</name>
        <dbReference type="ChEBI" id="CHEBI:29105"/>
    </ligand>
</feature>
<feature type="binding site" evidence="1">
    <location>
        <position position="138"/>
    </location>
    <ligand>
        <name>Zn(2+)</name>
        <dbReference type="ChEBI" id="CHEBI:29105"/>
    </ligand>
</feature>
<feature type="binding site" evidence="1">
    <location>
        <position position="141"/>
    </location>
    <ligand>
        <name>Zn(2+)</name>
        <dbReference type="ChEBI" id="CHEBI:29105"/>
    </ligand>
</feature>
<proteinExistence type="inferred from homology"/>
<organism>
    <name type="scientific">Escherichia coli (strain 55989 / EAEC)</name>
    <dbReference type="NCBI Taxonomy" id="585055"/>
    <lineage>
        <taxon>Bacteria</taxon>
        <taxon>Pseudomonadati</taxon>
        <taxon>Pseudomonadota</taxon>
        <taxon>Gammaproteobacteria</taxon>
        <taxon>Enterobacterales</taxon>
        <taxon>Enterobacteriaceae</taxon>
        <taxon>Escherichia</taxon>
    </lineage>
</organism>
<evidence type="ECO:0000255" key="1">
    <source>
        <dbReference type="HAMAP-Rule" id="MF_00002"/>
    </source>
</evidence>
<accession>B7LCV5</accession>
<dbReference type="EMBL" id="CU928145">
    <property type="protein sequence ID" value="CAV01776.1"/>
    <property type="molecule type" value="Genomic_DNA"/>
</dbReference>
<dbReference type="RefSeq" id="WP_000148581.1">
    <property type="nucleotide sequence ID" value="NZ_CP028304.1"/>
</dbReference>
<dbReference type="SMR" id="B7LCV5"/>
<dbReference type="GeneID" id="93777580"/>
<dbReference type="KEGG" id="eck:EC55989_4804"/>
<dbReference type="HOGENOM" id="CLU_128576_0_0_6"/>
<dbReference type="Proteomes" id="UP000000746">
    <property type="component" value="Chromosome"/>
</dbReference>
<dbReference type="GO" id="GO:0009347">
    <property type="term" value="C:aspartate carbamoyltransferase complex"/>
    <property type="evidence" value="ECO:0007669"/>
    <property type="project" value="InterPro"/>
</dbReference>
<dbReference type="GO" id="GO:0046872">
    <property type="term" value="F:metal ion binding"/>
    <property type="evidence" value="ECO:0007669"/>
    <property type="project" value="UniProtKB-KW"/>
</dbReference>
<dbReference type="GO" id="GO:0006207">
    <property type="term" value="P:'de novo' pyrimidine nucleobase biosynthetic process"/>
    <property type="evidence" value="ECO:0007669"/>
    <property type="project" value="InterPro"/>
</dbReference>
<dbReference type="GO" id="GO:0006221">
    <property type="term" value="P:pyrimidine nucleotide biosynthetic process"/>
    <property type="evidence" value="ECO:0007669"/>
    <property type="project" value="UniProtKB-UniRule"/>
</dbReference>
<dbReference type="FunFam" id="2.30.30.20:FF:000001">
    <property type="entry name" value="Aspartate carbamoyltransferase regulatory chain"/>
    <property type="match status" value="1"/>
</dbReference>
<dbReference type="FunFam" id="3.30.70.140:FF:000001">
    <property type="entry name" value="Aspartate carbamoyltransferase regulatory chain"/>
    <property type="match status" value="1"/>
</dbReference>
<dbReference type="Gene3D" id="2.30.30.20">
    <property type="entry name" value="Aspartate carbamoyltransferase regulatory subunit, C-terminal domain"/>
    <property type="match status" value="1"/>
</dbReference>
<dbReference type="Gene3D" id="3.30.70.140">
    <property type="entry name" value="Aspartate carbamoyltransferase regulatory subunit, N-terminal domain"/>
    <property type="match status" value="1"/>
</dbReference>
<dbReference type="HAMAP" id="MF_00002">
    <property type="entry name" value="Asp_carb_tr_reg"/>
    <property type="match status" value="1"/>
</dbReference>
<dbReference type="InterPro" id="IPR020545">
    <property type="entry name" value="Asp_carbamoyltransf_reg_N"/>
</dbReference>
<dbReference type="InterPro" id="IPR002801">
    <property type="entry name" value="Asp_carbamoylTrfase_reg"/>
</dbReference>
<dbReference type="InterPro" id="IPR020542">
    <property type="entry name" value="Asp_carbamoyltrfase_reg_C"/>
</dbReference>
<dbReference type="InterPro" id="IPR036792">
    <property type="entry name" value="Asp_carbatrfase_reg_C_sf"/>
</dbReference>
<dbReference type="InterPro" id="IPR036793">
    <property type="entry name" value="Asp_carbatrfase_reg_N_sf"/>
</dbReference>
<dbReference type="NCBIfam" id="TIGR00240">
    <property type="entry name" value="ATCase_reg"/>
    <property type="match status" value="1"/>
</dbReference>
<dbReference type="PANTHER" id="PTHR35805">
    <property type="entry name" value="ASPARTATE CARBAMOYLTRANSFERASE REGULATORY CHAIN"/>
    <property type="match status" value="1"/>
</dbReference>
<dbReference type="PANTHER" id="PTHR35805:SF1">
    <property type="entry name" value="ASPARTATE CARBAMOYLTRANSFERASE REGULATORY CHAIN"/>
    <property type="match status" value="1"/>
</dbReference>
<dbReference type="Pfam" id="PF01948">
    <property type="entry name" value="PyrI"/>
    <property type="match status" value="1"/>
</dbReference>
<dbReference type="Pfam" id="PF02748">
    <property type="entry name" value="PyrI_C"/>
    <property type="match status" value="1"/>
</dbReference>
<dbReference type="SUPFAM" id="SSF57825">
    <property type="entry name" value="Aspartate carbamoyltransferase, Regulatory-chain, C-terminal domain"/>
    <property type="match status" value="1"/>
</dbReference>
<dbReference type="SUPFAM" id="SSF54893">
    <property type="entry name" value="Aspartate carbamoyltransferase, Regulatory-chain, N-terminal domain"/>
    <property type="match status" value="1"/>
</dbReference>
<comment type="function">
    <text evidence="1">Involved in allosteric regulation of aspartate carbamoyltransferase.</text>
</comment>
<comment type="cofactor">
    <cofactor evidence="1">
        <name>Zn(2+)</name>
        <dbReference type="ChEBI" id="CHEBI:29105"/>
    </cofactor>
    <text evidence="1">Binds 1 zinc ion per subunit.</text>
</comment>
<comment type="subunit">
    <text evidence="1">Contains catalytic and regulatory chains.</text>
</comment>
<comment type="similarity">
    <text evidence="1">Belongs to the PyrI family.</text>
</comment>
<name>PYRI_ECO55</name>
<keyword id="KW-0479">Metal-binding</keyword>
<keyword id="KW-0665">Pyrimidine biosynthesis</keyword>
<keyword id="KW-1185">Reference proteome</keyword>
<keyword id="KW-0862">Zinc</keyword>
<sequence>MTHDNKLQVEAIKRGTVIDHIPAQIGFKLLSLFKLTETDQRITIGLNLPSGEMGRKDLIKIENTFLSEDQVDQLALYAPQATVNRIDNYEVVGKSRPSLPERIDNVLVCPNSNCISHAEPVSSSFAVRKRANDIALKCKYCEKEFSHNVVLAN</sequence>
<gene>
    <name evidence="1" type="primary">pyrI</name>
    <name type="ordered locus">EC55989_4804</name>
</gene>
<reference key="1">
    <citation type="journal article" date="2009" name="PLoS Genet.">
        <title>Organised genome dynamics in the Escherichia coli species results in highly diverse adaptive paths.</title>
        <authorList>
            <person name="Touchon M."/>
            <person name="Hoede C."/>
            <person name="Tenaillon O."/>
            <person name="Barbe V."/>
            <person name="Baeriswyl S."/>
            <person name="Bidet P."/>
            <person name="Bingen E."/>
            <person name="Bonacorsi S."/>
            <person name="Bouchier C."/>
            <person name="Bouvet O."/>
            <person name="Calteau A."/>
            <person name="Chiapello H."/>
            <person name="Clermont O."/>
            <person name="Cruveiller S."/>
            <person name="Danchin A."/>
            <person name="Diard M."/>
            <person name="Dossat C."/>
            <person name="Karoui M.E."/>
            <person name="Frapy E."/>
            <person name="Garry L."/>
            <person name="Ghigo J.M."/>
            <person name="Gilles A.M."/>
            <person name="Johnson J."/>
            <person name="Le Bouguenec C."/>
            <person name="Lescat M."/>
            <person name="Mangenot S."/>
            <person name="Martinez-Jehanne V."/>
            <person name="Matic I."/>
            <person name="Nassif X."/>
            <person name="Oztas S."/>
            <person name="Petit M.A."/>
            <person name="Pichon C."/>
            <person name="Rouy Z."/>
            <person name="Ruf C.S."/>
            <person name="Schneider D."/>
            <person name="Tourret J."/>
            <person name="Vacherie B."/>
            <person name="Vallenet D."/>
            <person name="Medigue C."/>
            <person name="Rocha E.P.C."/>
            <person name="Denamur E."/>
        </authorList>
    </citation>
    <scope>NUCLEOTIDE SEQUENCE [LARGE SCALE GENOMIC DNA]</scope>
    <source>
        <strain>55989 / EAEC</strain>
    </source>
</reference>